<proteinExistence type="inferred from homology"/>
<reference key="1">
    <citation type="journal article" date="2008" name="Antimicrob. Agents Chemother.">
        <title>Whole-genome pyrosequencing of an epidemic multidrug-resistant Acinetobacter baumannii strain belonging to the European clone II group.</title>
        <authorList>
            <person name="Iacono M."/>
            <person name="Villa L."/>
            <person name="Fortini D."/>
            <person name="Bordoni R."/>
            <person name="Imperi F."/>
            <person name="Bonnal R.J."/>
            <person name="Sicheritz-Ponten T."/>
            <person name="De Bellis G."/>
            <person name="Visca P."/>
            <person name="Cassone A."/>
            <person name="Carattoli A."/>
        </authorList>
    </citation>
    <scope>NUCLEOTIDE SEQUENCE [LARGE SCALE GENOMIC DNA]</scope>
    <source>
        <strain>ACICU</strain>
    </source>
</reference>
<feature type="chain" id="PRO_1000127655" description="UDP-3-O-acylglucosamine N-acyltransferase">
    <location>
        <begin position="1"/>
        <end position="356"/>
    </location>
</feature>
<feature type="active site" description="Proton acceptor" evidence="1">
    <location>
        <position position="242"/>
    </location>
</feature>
<keyword id="KW-0012">Acyltransferase</keyword>
<keyword id="KW-0441">Lipid A biosynthesis</keyword>
<keyword id="KW-0444">Lipid biosynthesis</keyword>
<keyword id="KW-0443">Lipid metabolism</keyword>
<keyword id="KW-0677">Repeat</keyword>
<keyword id="KW-0808">Transferase</keyword>
<sequence>MKVQQYRLDELAHLVKGELIGEGSLQFSNLASLENAEVNHLTFVNGEKHLDQAKVSRAGAYIVTAALKEHLPEKDNFIIVDNPYLAFAILTHVFDKKISSTGIESTAQIHPSAVISKTAYIGHYVVIGENCVVGDNTVIQSHTKLDDNVEVGKDCFIDSHVTITGGSKLRDRVRIHSSTVIGGEGFGFAPYQGKWHRIAQLGSVLIGNDVRIGSNCSIDRGALDNTILEDGVIIDNLVQIAHNVHIGSNTAIAAKCGIAGSTKIGKNCILAGACGVAGHLSIADNVTLTGMSMVTKNISEAGTYSSGTGLFENNHWKKTIVRLRQLADVPLTQITKRLDHIQAQIESLESTFNLRK</sequence>
<name>LPXD_ACIBC</name>
<comment type="function">
    <text evidence="1">Catalyzes the N-acylation of UDP-3-O-acylglucosamine using 3-hydroxyacyl-ACP as the acyl donor. Is involved in the biosynthesis of lipid A, a phosphorylated glycolipid that anchors the lipopolysaccharide to the outer membrane of the cell.</text>
</comment>
<comment type="catalytic activity">
    <reaction evidence="1">
        <text>a UDP-3-O-[(3R)-3-hydroxyacyl]-alpha-D-glucosamine + a (3R)-hydroxyacyl-[ACP] = a UDP-2-N,3-O-bis[(3R)-3-hydroxyacyl]-alpha-D-glucosamine + holo-[ACP] + H(+)</text>
        <dbReference type="Rhea" id="RHEA:53836"/>
        <dbReference type="Rhea" id="RHEA-COMP:9685"/>
        <dbReference type="Rhea" id="RHEA-COMP:9945"/>
        <dbReference type="ChEBI" id="CHEBI:15378"/>
        <dbReference type="ChEBI" id="CHEBI:64479"/>
        <dbReference type="ChEBI" id="CHEBI:78827"/>
        <dbReference type="ChEBI" id="CHEBI:137740"/>
        <dbReference type="ChEBI" id="CHEBI:137748"/>
        <dbReference type="EC" id="2.3.1.191"/>
    </reaction>
</comment>
<comment type="pathway">
    <text evidence="1">Bacterial outer membrane biogenesis; LPS lipid A biosynthesis.</text>
</comment>
<comment type="subunit">
    <text evidence="1">Homotrimer.</text>
</comment>
<comment type="similarity">
    <text evidence="1">Belongs to the transferase hexapeptide repeat family. LpxD subfamily.</text>
</comment>
<accession>B2I321</accession>
<gene>
    <name evidence="1" type="primary">lpxD</name>
    <name type="ordered locus">ACICU_02090</name>
</gene>
<evidence type="ECO:0000255" key="1">
    <source>
        <dbReference type="HAMAP-Rule" id="MF_00523"/>
    </source>
</evidence>
<protein>
    <recommendedName>
        <fullName evidence="1">UDP-3-O-acylglucosamine N-acyltransferase</fullName>
        <ecNumber evidence="1">2.3.1.191</ecNumber>
    </recommendedName>
</protein>
<organism>
    <name type="scientific">Acinetobacter baumannii (strain ACICU)</name>
    <dbReference type="NCBI Taxonomy" id="405416"/>
    <lineage>
        <taxon>Bacteria</taxon>
        <taxon>Pseudomonadati</taxon>
        <taxon>Pseudomonadota</taxon>
        <taxon>Gammaproteobacteria</taxon>
        <taxon>Moraxellales</taxon>
        <taxon>Moraxellaceae</taxon>
        <taxon>Acinetobacter</taxon>
        <taxon>Acinetobacter calcoaceticus/baumannii complex</taxon>
    </lineage>
</organism>
<dbReference type="EC" id="2.3.1.191" evidence="1"/>
<dbReference type="EMBL" id="CP000863">
    <property type="protein sequence ID" value="ACC57402.1"/>
    <property type="molecule type" value="Genomic_DNA"/>
</dbReference>
<dbReference type="RefSeq" id="WP_000868104.1">
    <property type="nucleotide sequence ID" value="NZ_CP031380.1"/>
</dbReference>
<dbReference type="SMR" id="B2I321"/>
<dbReference type="KEGG" id="abc:ACICU_02090"/>
<dbReference type="HOGENOM" id="CLU_049865_0_1_6"/>
<dbReference type="UniPathway" id="UPA00973"/>
<dbReference type="Proteomes" id="UP000008839">
    <property type="component" value="Chromosome"/>
</dbReference>
<dbReference type="GO" id="GO:0016020">
    <property type="term" value="C:membrane"/>
    <property type="evidence" value="ECO:0007669"/>
    <property type="project" value="GOC"/>
</dbReference>
<dbReference type="GO" id="GO:0016410">
    <property type="term" value="F:N-acyltransferase activity"/>
    <property type="evidence" value="ECO:0007669"/>
    <property type="project" value="InterPro"/>
</dbReference>
<dbReference type="GO" id="GO:0009245">
    <property type="term" value="P:lipid A biosynthetic process"/>
    <property type="evidence" value="ECO:0007669"/>
    <property type="project" value="UniProtKB-UniRule"/>
</dbReference>
<dbReference type="CDD" id="cd03352">
    <property type="entry name" value="LbH_LpxD"/>
    <property type="match status" value="1"/>
</dbReference>
<dbReference type="Gene3D" id="1.20.5.170">
    <property type="match status" value="1"/>
</dbReference>
<dbReference type="Gene3D" id="2.160.10.10">
    <property type="entry name" value="Hexapeptide repeat proteins"/>
    <property type="match status" value="1"/>
</dbReference>
<dbReference type="Gene3D" id="3.40.1390.10">
    <property type="entry name" value="MurE/MurF, N-terminal domain"/>
    <property type="match status" value="1"/>
</dbReference>
<dbReference type="HAMAP" id="MF_00523">
    <property type="entry name" value="LpxD"/>
    <property type="match status" value="1"/>
</dbReference>
<dbReference type="InterPro" id="IPR001451">
    <property type="entry name" value="Hexapep"/>
</dbReference>
<dbReference type="InterPro" id="IPR007691">
    <property type="entry name" value="LpxD"/>
</dbReference>
<dbReference type="InterPro" id="IPR011004">
    <property type="entry name" value="Trimer_LpxA-like_sf"/>
</dbReference>
<dbReference type="InterPro" id="IPR020573">
    <property type="entry name" value="UDP_GlcNAc_AcTrfase_non-rep"/>
</dbReference>
<dbReference type="NCBIfam" id="TIGR01853">
    <property type="entry name" value="lipid_A_lpxD"/>
    <property type="match status" value="1"/>
</dbReference>
<dbReference type="NCBIfam" id="NF002060">
    <property type="entry name" value="PRK00892.1"/>
    <property type="match status" value="1"/>
</dbReference>
<dbReference type="PANTHER" id="PTHR43378">
    <property type="entry name" value="UDP-3-O-ACYLGLUCOSAMINE N-ACYLTRANSFERASE"/>
    <property type="match status" value="1"/>
</dbReference>
<dbReference type="PANTHER" id="PTHR43378:SF2">
    <property type="entry name" value="UDP-3-O-ACYLGLUCOSAMINE N-ACYLTRANSFERASE 1, MITOCHONDRIAL-RELATED"/>
    <property type="match status" value="1"/>
</dbReference>
<dbReference type="Pfam" id="PF00132">
    <property type="entry name" value="Hexapep"/>
    <property type="match status" value="2"/>
</dbReference>
<dbReference type="Pfam" id="PF04613">
    <property type="entry name" value="LpxD"/>
    <property type="match status" value="1"/>
</dbReference>
<dbReference type="SUPFAM" id="SSF51161">
    <property type="entry name" value="Trimeric LpxA-like enzymes"/>
    <property type="match status" value="1"/>
</dbReference>